<comment type="similarity">
    <text evidence="2">Belongs to the MSANTD3 family.</text>
</comment>
<feature type="chain" id="PRO_0000292593" description="Myb/SANT-like DNA-binding domain-containing protein 3">
    <location>
        <begin position="1"/>
        <end position="365"/>
    </location>
</feature>
<feature type="domain" description="Myb-like">
    <location>
        <begin position="13"/>
        <end position="78"/>
    </location>
</feature>
<feature type="coiled-coil region" evidence="1">
    <location>
        <begin position="301"/>
        <end position="337"/>
    </location>
</feature>
<proteinExistence type="evidence at transcript level"/>
<accession>Q28J92</accession>
<organism>
    <name type="scientific">Xenopus tropicalis</name>
    <name type="common">Western clawed frog</name>
    <name type="synonym">Silurana tropicalis</name>
    <dbReference type="NCBI Taxonomy" id="8364"/>
    <lineage>
        <taxon>Eukaryota</taxon>
        <taxon>Metazoa</taxon>
        <taxon>Chordata</taxon>
        <taxon>Craniata</taxon>
        <taxon>Vertebrata</taxon>
        <taxon>Euteleostomi</taxon>
        <taxon>Amphibia</taxon>
        <taxon>Batrachia</taxon>
        <taxon>Anura</taxon>
        <taxon>Pipoidea</taxon>
        <taxon>Pipidae</taxon>
        <taxon>Xenopodinae</taxon>
        <taxon>Xenopus</taxon>
        <taxon>Silurana</taxon>
    </lineage>
</organism>
<dbReference type="EMBL" id="CR760001">
    <property type="protein sequence ID" value="CAJ82361.1"/>
    <property type="molecule type" value="mRNA"/>
</dbReference>
<dbReference type="EMBL" id="BC135254">
    <property type="protein sequence ID" value="AAI35255.1"/>
    <property type="molecule type" value="mRNA"/>
</dbReference>
<dbReference type="RefSeq" id="NP_001016739.1">
    <property type="nucleotide sequence ID" value="NM_001016739.3"/>
</dbReference>
<dbReference type="RefSeq" id="XP_012820176.1">
    <property type="nucleotide sequence ID" value="XM_012964722.3"/>
</dbReference>
<dbReference type="SMR" id="Q28J92"/>
<dbReference type="FunCoup" id="Q28J92">
    <property type="interactions" value="81"/>
</dbReference>
<dbReference type="PaxDb" id="8364-ENSXETP00000030537"/>
<dbReference type="DNASU" id="549493"/>
<dbReference type="GeneID" id="549493"/>
<dbReference type="KEGG" id="xtr:549493"/>
<dbReference type="AGR" id="Xenbase:XB-GENE-5737820"/>
<dbReference type="CTD" id="91283"/>
<dbReference type="Xenbase" id="XB-GENE-5737820">
    <property type="gene designation" value="msantd3"/>
</dbReference>
<dbReference type="eggNOG" id="ENOG502RFDD">
    <property type="taxonomic scope" value="Eukaryota"/>
</dbReference>
<dbReference type="HOGENOM" id="CLU_065066_0_0_1"/>
<dbReference type="InParanoid" id="Q28J92"/>
<dbReference type="OMA" id="QTVAKEW"/>
<dbReference type="OrthoDB" id="3066195at2759"/>
<dbReference type="PhylomeDB" id="Q28J92"/>
<dbReference type="TreeFam" id="TF328595"/>
<dbReference type="Proteomes" id="UP000008143">
    <property type="component" value="Chromosome 6"/>
</dbReference>
<dbReference type="Bgee" id="ENSXETG00000013983">
    <property type="expression patterns" value="Expressed in egg cell and 12 other cell types or tissues"/>
</dbReference>
<dbReference type="InterPro" id="IPR028002">
    <property type="entry name" value="Myb_DNA-bind_5"/>
</dbReference>
<dbReference type="PANTHER" id="PTHR21632:SF2">
    <property type="entry name" value="MYB_SANT-LIKE DNA-BINDING DOMAIN-CONTAINING PROTEIN 3"/>
    <property type="match status" value="1"/>
</dbReference>
<dbReference type="PANTHER" id="PTHR21632">
    <property type="entry name" value="REGULATORY PROTEIN ZESTE"/>
    <property type="match status" value="1"/>
</dbReference>
<dbReference type="Pfam" id="PF13873">
    <property type="entry name" value="Myb_DNA-bind_5"/>
    <property type="match status" value="1"/>
</dbReference>
<reference key="1">
    <citation type="submission" date="2006-10" db="EMBL/GenBank/DDBJ databases">
        <authorList>
            <consortium name="Sanger Xenopus tropicalis EST/cDNA project"/>
        </authorList>
    </citation>
    <scope>NUCLEOTIDE SEQUENCE [LARGE SCALE MRNA]</scope>
    <source>
        <tissue>Neurula</tissue>
    </source>
</reference>
<reference key="2">
    <citation type="submission" date="2007-03" db="EMBL/GenBank/DDBJ databases">
        <authorList>
            <consortium name="NIH - Xenopus Gene Collection (XGC) project"/>
        </authorList>
    </citation>
    <scope>NUCLEOTIDE SEQUENCE [LARGE SCALE MRNA]</scope>
    <source>
        <tissue>Tadpole</tissue>
    </source>
</reference>
<name>MSD3_XENTR</name>
<protein>
    <recommendedName>
        <fullName>Myb/SANT-like DNA-binding domain-containing protein 3</fullName>
    </recommendedName>
</protein>
<keyword id="KW-0175">Coiled coil</keyword>
<keyword id="KW-1185">Reference proteome</keyword>
<gene>
    <name type="primary">msantd3</name>
    <name type="ORF">TNeu005j19.1</name>
</gene>
<sequence length="365" mass="42256">MQNNEILKPAKYFSELEKSVLLALVEKYKYVLECKKSDARTIALKQRTWQALAHEYNSQPSVSLRDFKQLKKCWENIKARTKKIMAHERREKGKLFGPESNSHQALKEKVASMIPEQLYFVQNQPDDERGYNHDTSNQEMDCKRVSLLDLEVLIDEQGKIQTKPFRKVPETNSLCDDGSPPQSIDKAFPNGDLELLIDEQGKIQAEPIRKVPVTDSQCAQGSPSSSIKTESFVVPERDVYEDQNSIVNMHSSESSLHSTPLFPSSKISANRTYGRKPSQNGIFTKMHEEQHHQQMSILQLQLIQMNEVHVAKVQQIERECEMAEEEHRIKMEILNKKKMYWERKLQTITKEWPVASFNRPFPNSP</sequence>
<evidence type="ECO:0000255" key="1"/>
<evidence type="ECO:0000305" key="2"/>